<sequence length="258" mass="28440">MVLIRVLANLLILQLSYAQRSSELVIGGDECNINEHRFLVALYKSGRFRCGGTLINQEWVLTAAHCDRRNMEIKLGMHSKNVPNEDEQRRVPKEKFFCDSNKNYTQWNKDIMLIRLNSPVNNSTHIAPLSLPSNPPIVGSVCRIMGWGTITSPNETYPDVPHCANINLFNYTVCHGAHAGLPATSRTLCAGVLEGGKDTCKGDSGGPLICNGQFQGFVSWGGDPCAQPREPGVYTKVFDHLDWIQNIIAGNTTATCPL</sequence>
<evidence type="ECO:0000250" key="1"/>
<evidence type="ECO:0000255" key="2"/>
<evidence type="ECO:0000255" key="3">
    <source>
        <dbReference type="PROSITE-ProRule" id="PRU00274"/>
    </source>
</evidence>
<feature type="signal peptide" evidence="2">
    <location>
        <begin position="1"/>
        <end position="18"/>
    </location>
</feature>
<feature type="propeptide" id="PRO_0000295836" evidence="1">
    <location>
        <begin position="19"/>
        <end position="24"/>
    </location>
</feature>
<feature type="chain" id="PRO_5000061228" description="Snake venom serine protease KN12">
    <location>
        <begin position="25"/>
        <end position="258"/>
    </location>
</feature>
<feature type="domain" description="Peptidase S1" evidence="3">
    <location>
        <begin position="25"/>
        <end position="249"/>
    </location>
</feature>
<feature type="active site" description="Charge relay system" evidence="1">
    <location>
        <position position="65"/>
    </location>
</feature>
<feature type="active site" description="Charge relay system" evidence="1">
    <location>
        <position position="110"/>
    </location>
</feature>
<feature type="active site" description="Charge relay system" evidence="1">
    <location>
        <position position="204"/>
    </location>
</feature>
<feature type="glycosylation site" description="N-linked (GlcNAc...) asparagine" evidence="2">
    <location>
        <position position="103"/>
    </location>
</feature>
<feature type="glycosylation site" description="N-linked (GlcNAc...) asparagine" evidence="2">
    <location>
        <position position="121"/>
    </location>
</feature>
<feature type="glycosylation site" description="N-linked (GlcNAc...) asparagine" evidence="2">
    <location>
        <position position="122"/>
    </location>
</feature>
<feature type="glycosylation site" description="N-linked (GlcNAc...) asparagine" evidence="2">
    <location>
        <position position="154"/>
    </location>
</feature>
<feature type="glycosylation site" description="N-linked (GlcNAc...) asparagine" evidence="2">
    <location>
        <position position="170"/>
    </location>
</feature>
<feature type="glycosylation site" description="N-linked (GlcNAc...) asparagine" evidence="2">
    <location>
        <position position="251"/>
    </location>
</feature>
<feature type="disulfide bond" evidence="3">
    <location>
        <begin position="31"/>
        <end position="163"/>
    </location>
</feature>
<feature type="disulfide bond" evidence="3">
    <location>
        <begin position="50"/>
        <end position="66"/>
    </location>
</feature>
<feature type="disulfide bond" evidence="3">
    <location>
        <begin position="98"/>
        <end position="256"/>
    </location>
</feature>
<feature type="disulfide bond" evidence="3">
    <location>
        <begin position="142"/>
        <end position="210"/>
    </location>
</feature>
<feature type="disulfide bond" evidence="3">
    <location>
        <begin position="174"/>
        <end position="189"/>
    </location>
</feature>
<feature type="disulfide bond" evidence="3">
    <location>
        <begin position="200"/>
        <end position="225"/>
    </location>
</feature>
<reference key="1">
    <citation type="submission" date="2001-06" db="EMBL/GenBank/DDBJ databases">
        <title>Identification of geographic variations and cloning of venom proteins of Trimeresurus stejnegeri: serine proteases and phospholipases.</title>
        <authorList>
            <person name="Tsai I.-H."/>
            <person name="Wang Y.-M."/>
        </authorList>
    </citation>
    <scope>NUCLEOTIDE SEQUENCE [MRNA]</scope>
    <source>
        <tissue>Venom gland</tissue>
    </source>
</reference>
<protein>
    <recommendedName>
        <fullName>Snake venom serine protease KN12</fullName>
        <shortName>SVSP</shortName>
        <ecNumber>3.4.21.-</ecNumber>
    </recommendedName>
</protein>
<organism>
    <name type="scientific">Trimeresurus stejnegeri</name>
    <name type="common">Chinese green tree viper</name>
    <name type="synonym">Viridovipera stejnegeri</name>
    <dbReference type="NCBI Taxonomy" id="39682"/>
    <lineage>
        <taxon>Eukaryota</taxon>
        <taxon>Metazoa</taxon>
        <taxon>Chordata</taxon>
        <taxon>Craniata</taxon>
        <taxon>Vertebrata</taxon>
        <taxon>Euteleostomi</taxon>
        <taxon>Lepidosauria</taxon>
        <taxon>Squamata</taxon>
        <taxon>Bifurcata</taxon>
        <taxon>Unidentata</taxon>
        <taxon>Episquamata</taxon>
        <taxon>Toxicofera</taxon>
        <taxon>Serpentes</taxon>
        <taxon>Colubroidea</taxon>
        <taxon>Viperidae</taxon>
        <taxon>Crotalinae</taxon>
        <taxon>Trimeresurus</taxon>
    </lineage>
</organism>
<name>VSP12_TRIST</name>
<proteinExistence type="evidence at transcript level"/>
<accession>Q71QI1</accession>
<dbReference type="EC" id="3.4.21.-"/>
<dbReference type="EMBL" id="AF395776">
    <property type="protein sequence ID" value="AAQ02906.1"/>
    <property type="molecule type" value="mRNA"/>
</dbReference>
<dbReference type="SMR" id="Q71QI1"/>
<dbReference type="MEROPS" id="S01.497"/>
<dbReference type="GO" id="GO:0005576">
    <property type="term" value="C:extracellular region"/>
    <property type="evidence" value="ECO:0007669"/>
    <property type="project" value="UniProtKB-SubCell"/>
</dbReference>
<dbReference type="GO" id="GO:0030141">
    <property type="term" value="C:secretory granule"/>
    <property type="evidence" value="ECO:0007669"/>
    <property type="project" value="TreeGrafter"/>
</dbReference>
<dbReference type="GO" id="GO:0004252">
    <property type="term" value="F:serine-type endopeptidase activity"/>
    <property type="evidence" value="ECO:0007669"/>
    <property type="project" value="InterPro"/>
</dbReference>
<dbReference type="GO" id="GO:0090729">
    <property type="term" value="F:toxin activity"/>
    <property type="evidence" value="ECO:0007669"/>
    <property type="project" value="UniProtKB-KW"/>
</dbReference>
<dbReference type="GO" id="GO:0006508">
    <property type="term" value="P:proteolysis"/>
    <property type="evidence" value="ECO:0007669"/>
    <property type="project" value="UniProtKB-KW"/>
</dbReference>
<dbReference type="CDD" id="cd00190">
    <property type="entry name" value="Tryp_SPc"/>
    <property type="match status" value="1"/>
</dbReference>
<dbReference type="FunFam" id="2.40.10.10:FF:000158">
    <property type="entry name" value="Thrombin-like enzyme saxthrombin"/>
    <property type="match status" value="1"/>
</dbReference>
<dbReference type="FunFam" id="2.40.10.10:FF:000153">
    <property type="entry name" value="Venom plasminogen activator TSV-PA"/>
    <property type="match status" value="1"/>
</dbReference>
<dbReference type="Gene3D" id="2.40.10.10">
    <property type="entry name" value="Trypsin-like serine proteases"/>
    <property type="match status" value="2"/>
</dbReference>
<dbReference type="InterPro" id="IPR009003">
    <property type="entry name" value="Peptidase_S1_PA"/>
</dbReference>
<dbReference type="InterPro" id="IPR043504">
    <property type="entry name" value="Peptidase_S1_PA_chymotrypsin"/>
</dbReference>
<dbReference type="InterPro" id="IPR001314">
    <property type="entry name" value="Peptidase_S1A"/>
</dbReference>
<dbReference type="InterPro" id="IPR001254">
    <property type="entry name" value="Trypsin_dom"/>
</dbReference>
<dbReference type="InterPro" id="IPR018114">
    <property type="entry name" value="TRYPSIN_HIS"/>
</dbReference>
<dbReference type="InterPro" id="IPR033116">
    <property type="entry name" value="TRYPSIN_SER"/>
</dbReference>
<dbReference type="PANTHER" id="PTHR24271:SF47">
    <property type="entry name" value="KALLIKREIN-1"/>
    <property type="match status" value="1"/>
</dbReference>
<dbReference type="PANTHER" id="PTHR24271">
    <property type="entry name" value="KALLIKREIN-RELATED"/>
    <property type="match status" value="1"/>
</dbReference>
<dbReference type="Pfam" id="PF00089">
    <property type="entry name" value="Trypsin"/>
    <property type="match status" value="1"/>
</dbReference>
<dbReference type="PRINTS" id="PR00722">
    <property type="entry name" value="CHYMOTRYPSIN"/>
</dbReference>
<dbReference type="SMART" id="SM00020">
    <property type="entry name" value="Tryp_SPc"/>
    <property type="match status" value="1"/>
</dbReference>
<dbReference type="SUPFAM" id="SSF50494">
    <property type="entry name" value="Trypsin-like serine proteases"/>
    <property type="match status" value="1"/>
</dbReference>
<dbReference type="PROSITE" id="PS50240">
    <property type="entry name" value="TRYPSIN_DOM"/>
    <property type="match status" value="1"/>
</dbReference>
<dbReference type="PROSITE" id="PS00134">
    <property type="entry name" value="TRYPSIN_HIS"/>
    <property type="match status" value="1"/>
</dbReference>
<dbReference type="PROSITE" id="PS00135">
    <property type="entry name" value="TRYPSIN_SER"/>
    <property type="match status" value="1"/>
</dbReference>
<keyword id="KW-1015">Disulfide bond</keyword>
<keyword id="KW-0325">Glycoprotein</keyword>
<keyword id="KW-1199">Hemostasis impairing toxin</keyword>
<keyword id="KW-0378">Hydrolase</keyword>
<keyword id="KW-0645">Protease</keyword>
<keyword id="KW-0964">Secreted</keyword>
<keyword id="KW-0720">Serine protease</keyword>
<keyword id="KW-0732">Signal</keyword>
<keyword id="KW-0800">Toxin</keyword>
<keyword id="KW-0865">Zymogen</keyword>
<comment type="function">
    <text evidence="1">Snake venom serine protease that may act in the hemostasis system of the prey.</text>
</comment>
<comment type="subunit">
    <text evidence="1">Monomer.</text>
</comment>
<comment type="subcellular location">
    <subcellularLocation>
        <location evidence="1">Secreted</location>
    </subcellularLocation>
</comment>
<comment type="tissue specificity">
    <text>Expressed by the venom gland.</text>
</comment>
<comment type="similarity">
    <text evidence="3">Belongs to the peptidase S1 family. Snake venom subfamily.</text>
</comment>